<sequence>MYKHRYFHFFFFFFFFLVSTKIIRSFTFLNNNTNLSNPVYFKKKANMVYDLIVIGGGSGGMAAARRAARHNAKVALVEKSRLGGTCVNVGCVPKKIMFNAASVHDILENSRHYGFDTKFSFNLPLLVERRDKYIQRLNNIYRQNLSKDKVDLYEGTASFLSENRILIKGTKDNNNKDNGPLNEEILEGRNILIAVGNKPVFPPVKGIENTISSDEFFNIKESKKIGIVGSGYIAVELINVIKRLGIDSYIFARGNRILRKFDESVINVLENDMKKNNINIVTFADVVEIKKVSDKNLSIHLSDGRIYEHFDHVIYCVGRSPDTENLNLEKLNVETNNNYIVVDENQRTSVNNIYAVGDCCMVKKSKEIEDLNLLKLYNEETYLNKKENVTEDIFYNVQLTPVAINAGRLLADRLFLKKTRKTNYKLIPTVIFSHPPIGTIGLSEEAAIQIYGKENVKIYESKFTNLFFSVYDIEPELKEKTYLKLVCVGKDELIKGLHIIGLNADEIVQGFAVALKMNATKKDFDETIPIHPTAAEEFLTLQPWMK</sequence>
<comment type="function">
    <text evidence="3">Catalyzes the reduction of glutathione disulfide (GSSG) to reduced glutathione (GSH). Constitutes the major mechanism to maintain a high GSH:GSSG ratio in the cytosol.</text>
</comment>
<comment type="catalytic activity">
    <reaction evidence="3">
        <text>2 glutathione + NADP(+) = glutathione disulfide + NADPH + H(+)</text>
        <dbReference type="Rhea" id="RHEA:11740"/>
        <dbReference type="ChEBI" id="CHEBI:15378"/>
        <dbReference type="ChEBI" id="CHEBI:57783"/>
        <dbReference type="ChEBI" id="CHEBI:57925"/>
        <dbReference type="ChEBI" id="CHEBI:58297"/>
        <dbReference type="ChEBI" id="CHEBI:58349"/>
        <dbReference type="EC" id="1.8.1.7"/>
    </reaction>
    <physiologicalReaction direction="right-to-left" evidence="3">
        <dbReference type="Rhea" id="RHEA:11742"/>
    </physiologicalReaction>
</comment>
<comment type="cofactor">
    <cofactor evidence="2">
        <name>FAD</name>
        <dbReference type="ChEBI" id="CHEBI:57692"/>
    </cofactor>
    <text evidence="2">Binds 1 FAD per subunit.</text>
</comment>
<comment type="biophysicochemical properties">
    <kinetics>
        <KM evidence="3">71 uM for glutathione disulfide (GSSG) (at 25 degrees Celsius and pH 6.9)</KM>
    </kinetics>
</comment>
<comment type="subunit">
    <text evidence="2">Homodimer.</text>
</comment>
<comment type="subcellular location">
    <molecule>Isoform 1</molecule>
    <subcellularLocation>
        <location evidence="4">Cytoplasm</location>
    </subcellularLocation>
</comment>
<comment type="subcellular location">
    <molecule>Isoform 2</molecule>
    <subcellularLocation>
        <location evidence="4">Plastid</location>
        <location evidence="4">Apicoplast</location>
    </subcellularLocation>
</comment>
<comment type="alternative products">
    <event type="alternative initiation"/>
    <isoform>
        <id>O15770-2</id>
        <name>2</name>
        <sequence type="displayed"/>
    </isoform>
    <isoform>
        <id>O15770-1</id>
        <name>1</name>
        <sequence type="described" ref="VSP_061462"/>
    </isoform>
</comment>
<comment type="miscellaneous">
    <molecule>Isoform 1</molecule>
    <text evidence="4">Produced by alternative initiation at Met-47 of isoform 2.</text>
</comment>
<comment type="miscellaneous">
    <text evidence="2">The active site is a redox-active disulfide bond.</text>
</comment>
<comment type="similarity">
    <text evidence="7">Belongs to the class-I pyridine nucleotide-disulfide oxidoreductase family.</text>
</comment>
<gene>
    <name evidence="5" type="primary">GR</name>
    <name type="synonym">GR3</name>
    <name type="ORF">PF14_0192</name>
    <name type="ORF">PF3D7_1419800</name>
</gene>
<reference key="1">
    <citation type="submission" date="1997-10" db="EMBL/GenBank/DDBJ databases">
        <title>Glutathione reductase from Plasmodium falciparum.</title>
        <authorList>
            <person name="Gilberger T.-W."/>
            <person name="Walter R.D."/>
            <person name="Mueller S."/>
        </authorList>
    </citation>
    <scope>NUCLEOTIDE SEQUENCE [MRNA]</scope>
</reference>
<reference key="2">
    <citation type="journal article" date="2002" name="Nature">
        <title>Genome sequence of the human malaria parasite Plasmodium falciparum.</title>
        <authorList>
            <person name="Gardner M.J."/>
            <person name="Hall N."/>
            <person name="Fung E."/>
            <person name="White O."/>
            <person name="Berriman M."/>
            <person name="Hyman R.W."/>
            <person name="Carlton J.M."/>
            <person name="Pain A."/>
            <person name="Nelson K.E."/>
            <person name="Bowman S."/>
            <person name="Paulsen I.T."/>
            <person name="James K.D."/>
            <person name="Eisen J.A."/>
            <person name="Rutherford K.M."/>
            <person name="Salzberg S.L."/>
            <person name="Craig A."/>
            <person name="Kyes S."/>
            <person name="Chan M.-S."/>
            <person name="Nene V."/>
            <person name="Shallom S.J."/>
            <person name="Suh B."/>
            <person name="Peterson J."/>
            <person name="Angiuoli S."/>
            <person name="Pertea M."/>
            <person name="Allen J."/>
            <person name="Selengut J."/>
            <person name="Haft D."/>
            <person name="Mather M.W."/>
            <person name="Vaidya A.B."/>
            <person name="Martin D.M.A."/>
            <person name="Fairlamb A.H."/>
            <person name="Fraunholz M.J."/>
            <person name="Roos D.S."/>
            <person name="Ralph S.A."/>
            <person name="McFadden G.I."/>
            <person name="Cummings L.M."/>
            <person name="Subramanian G.M."/>
            <person name="Mungall C."/>
            <person name="Venter J.C."/>
            <person name="Carucci D.J."/>
            <person name="Hoffman S.L."/>
            <person name="Newbold C."/>
            <person name="Davis R.W."/>
            <person name="Fraser C.M."/>
            <person name="Barrell B.G."/>
        </authorList>
    </citation>
    <scope>NUCLEOTIDE SEQUENCE [LARGE SCALE GENOMIC DNA]</scope>
    <source>
        <strain>3D7</strain>
    </source>
</reference>
<reference key="3">
    <citation type="journal article" date="2003" name="J. Mol. Biol.">
        <title>Glutathione reductase of the malarial parasite Plasmodium falciparum: crystal structure and inhibitor development.</title>
        <authorList>
            <person name="Sarma G.N."/>
            <person name="Savvides S.N."/>
            <person name="Becker K."/>
            <person name="Schirmer M."/>
            <person name="Schirmer R.H."/>
            <person name="Karplus P.A."/>
        </authorList>
    </citation>
    <scope>FUNCTION</scope>
    <scope>CATALYTIC ACTIVITY</scope>
    <scope>BIOPHYSICOCHEMICAL PROPERTIES</scope>
</reference>
<reference key="4">
    <citation type="journal article" date="2010" name="PLoS Pathog.">
        <title>Compartmentation of redox metabolism in malaria parasites.</title>
        <authorList>
            <person name="Kehr S."/>
            <person name="Sturm N."/>
            <person name="Rahlfs S."/>
            <person name="Przyborski J.M."/>
            <person name="Becker K."/>
        </authorList>
    </citation>
    <scope>SUBCELLULAR LOCATION</scope>
    <scope>ALTERNATIVE INITIATION (ISOFORMS 1 AND 2)</scope>
</reference>
<organism>
    <name type="scientific">Plasmodium falciparum (isolate 3D7)</name>
    <dbReference type="NCBI Taxonomy" id="36329"/>
    <lineage>
        <taxon>Eukaryota</taxon>
        <taxon>Sar</taxon>
        <taxon>Alveolata</taxon>
        <taxon>Apicomplexa</taxon>
        <taxon>Aconoidasida</taxon>
        <taxon>Haemosporida</taxon>
        <taxon>Plasmodiidae</taxon>
        <taxon>Plasmodium</taxon>
        <taxon>Plasmodium (Laverania)</taxon>
    </lineage>
</organism>
<name>GSHR_PLAF7</name>
<dbReference type="EC" id="1.8.1.7" evidence="3"/>
<dbReference type="EMBL" id="AF027825">
    <property type="protein sequence ID" value="AAB84117.1"/>
    <property type="molecule type" value="mRNA"/>
</dbReference>
<dbReference type="EMBL" id="LN999946">
    <property type="protein sequence ID" value="CZT99904.1"/>
    <property type="molecule type" value="Genomic_DNA"/>
</dbReference>
<dbReference type="EMBL" id="LN999946">
    <property type="protein sequence ID" value="CZT99905.1"/>
    <property type="molecule type" value="Genomic_DNA"/>
</dbReference>
<dbReference type="RefSeq" id="XP_001348365.1">
    <molecule id="O15770-1"/>
    <property type="nucleotide sequence ID" value="XM_001348329.1"/>
</dbReference>
<dbReference type="SMR" id="O15770"/>
<dbReference type="FunCoup" id="O15770">
    <property type="interactions" value="13"/>
</dbReference>
<dbReference type="STRING" id="36329.A0A144A3W0"/>
<dbReference type="BindingDB" id="O15770"/>
<dbReference type="ChEMBL" id="CHEMBL5061"/>
<dbReference type="DrugCentral" id="O15770"/>
<dbReference type="PaxDb" id="5833-PF14_0192"/>
<dbReference type="EnsemblProtists" id="CZT99904">
    <molecule id="O15770-1"/>
    <property type="protein sequence ID" value="CZT99904"/>
    <property type="gene ID" value="PF3D7_1419800.1"/>
</dbReference>
<dbReference type="EnsemblProtists" id="CZT99905">
    <molecule id="O15770-2"/>
    <property type="protein sequence ID" value="CZT99905"/>
    <property type="gene ID" value="PF3D7_1419800.2"/>
</dbReference>
<dbReference type="KEGG" id="pfa:PF3D7_1419800.1"/>
<dbReference type="VEuPathDB" id="PlasmoDB:PF3D7_1419800"/>
<dbReference type="HOGENOM" id="CLU_016755_2_2_1"/>
<dbReference type="OMA" id="MSKHYDY"/>
<dbReference type="OrthoDB" id="5956163at2759"/>
<dbReference type="PhylomeDB" id="O15770"/>
<dbReference type="Reactome" id="R-PFA-3299685">
    <property type="pathway name" value="Detoxification of Reactive Oxygen Species"/>
</dbReference>
<dbReference type="Reactome" id="R-PFA-499943">
    <property type="pathway name" value="Interconversion of nucleotide di- and triphosphates"/>
</dbReference>
<dbReference type="Reactome" id="R-PFA-5628897">
    <property type="pathway name" value="TP53 Regulates Metabolic Genes"/>
</dbReference>
<dbReference type="Proteomes" id="UP000001450">
    <property type="component" value="Chromosome 14"/>
</dbReference>
<dbReference type="GO" id="GO:0020011">
    <property type="term" value="C:apicoplast"/>
    <property type="evidence" value="ECO:0000314"/>
    <property type="project" value="GeneDB"/>
</dbReference>
<dbReference type="GO" id="GO:0005737">
    <property type="term" value="C:cytoplasm"/>
    <property type="evidence" value="ECO:0000314"/>
    <property type="project" value="GeneDB"/>
</dbReference>
<dbReference type="GO" id="GO:0050660">
    <property type="term" value="F:flavin adenine dinucleotide binding"/>
    <property type="evidence" value="ECO:0007669"/>
    <property type="project" value="InterPro"/>
</dbReference>
<dbReference type="GO" id="GO:0004362">
    <property type="term" value="F:glutathione-disulfide reductase (NADPH) activity"/>
    <property type="evidence" value="ECO:0000314"/>
    <property type="project" value="UniProtKB"/>
</dbReference>
<dbReference type="GO" id="GO:0045454">
    <property type="term" value="P:cell redox homeostasis"/>
    <property type="evidence" value="ECO:0007669"/>
    <property type="project" value="InterPro"/>
</dbReference>
<dbReference type="GO" id="GO:0006979">
    <property type="term" value="P:response to oxidative stress"/>
    <property type="evidence" value="ECO:0000250"/>
    <property type="project" value="GeneDB"/>
</dbReference>
<dbReference type="FunFam" id="3.30.390.30:FF:000014">
    <property type="entry name" value="Glutathione reductase"/>
    <property type="match status" value="1"/>
</dbReference>
<dbReference type="FunFam" id="3.50.50.60:FF:000277">
    <property type="entry name" value="Glutathione reductase"/>
    <property type="match status" value="1"/>
</dbReference>
<dbReference type="Gene3D" id="3.30.390.30">
    <property type="match status" value="1"/>
</dbReference>
<dbReference type="Gene3D" id="3.50.50.60">
    <property type="entry name" value="FAD/NAD(P)-binding domain"/>
    <property type="match status" value="2"/>
</dbReference>
<dbReference type="InterPro" id="IPR036188">
    <property type="entry name" value="FAD/NAD-bd_sf"/>
</dbReference>
<dbReference type="InterPro" id="IPR023753">
    <property type="entry name" value="FAD/NAD-binding_dom"/>
</dbReference>
<dbReference type="InterPro" id="IPR016156">
    <property type="entry name" value="FAD/NAD-linked_Rdtase_dimer_sf"/>
</dbReference>
<dbReference type="InterPro" id="IPR046952">
    <property type="entry name" value="GSHR/TRXR-like"/>
</dbReference>
<dbReference type="InterPro" id="IPR001100">
    <property type="entry name" value="Pyr_nuc-diS_OxRdtase"/>
</dbReference>
<dbReference type="InterPro" id="IPR004099">
    <property type="entry name" value="Pyr_nucl-diS_OxRdtase_dimer"/>
</dbReference>
<dbReference type="InterPro" id="IPR012999">
    <property type="entry name" value="Pyr_OxRdtase_I_AS"/>
</dbReference>
<dbReference type="PANTHER" id="PTHR42737">
    <property type="entry name" value="GLUTATHIONE REDUCTASE"/>
    <property type="match status" value="1"/>
</dbReference>
<dbReference type="PANTHER" id="PTHR42737:SF2">
    <property type="entry name" value="GLUTATHIONE REDUCTASE"/>
    <property type="match status" value="1"/>
</dbReference>
<dbReference type="Pfam" id="PF07992">
    <property type="entry name" value="Pyr_redox_2"/>
    <property type="match status" value="1"/>
</dbReference>
<dbReference type="Pfam" id="PF02852">
    <property type="entry name" value="Pyr_redox_dim"/>
    <property type="match status" value="1"/>
</dbReference>
<dbReference type="PIRSF" id="PIRSF000350">
    <property type="entry name" value="Mercury_reductase_MerA"/>
    <property type="match status" value="1"/>
</dbReference>
<dbReference type="PRINTS" id="PR00368">
    <property type="entry name" value="FADPNR"/>
</dbReference>
<dbReference type="PRINTS" id="PR00411">
    <property type="entry name" value="PNDRDTASEI"/>
</dbReference>
<dbReference type="SUPFAM" id="SSF51905">
    <property type="entry name" value="FAD/NAD(P)-binding domain"/>
    <property type="match status" value="1"/>
</dbReference>
<dbReference type="SUPFAM" id="SSF55424">
    <property type="entry name" value="FAD/NAD-linked reductases, dimerisation (C-terminal) domain"/>
    <property type="match status" value="1"/>
</dbReference>
<dbReference type="PROSITE" id="PS00076">
    <property type="entry name" value="PYRIDINE_REDOX_1"/>
    <property type="match status" value="1"/>
</dbReference>
<proteinExistence type="evidence at protein level"/>
<evidence type="ECO:0000250" key="1">
    <source>
        <dbReference type="UniProtKB" id="P00390"/>
    </source>
</evidence>
<evidence type="ECO:0000250" key="2">
    <source>
        <dbReference type="UniProtKB" id="Q94655"/>
    </source>
</evidence>
<evidence type="ECO:0000269" key="3">
    <source>
    </source>
</evidence>
<evidence type="ECO:0000269" key="4">
    <source>
    </source>
</evidence>
<evidence type="ECO:0000303" key="5">
    <source>
    </source>
</evidence>
<evidence type="ECO:0000303" key="6">
    <source ref="1"/>
</evidence>
<evidence type="ECO:0000305" key="7"/>
<protein>
    <recommendedName>
        <fullName evidence="6">Glutathione reductase</fullName>
        <shortName evidence="7">GRase</shortName>
        <shortName evidence="5">PfGR</shortName>
        <ecNumber evidence="3">1.8.1.7</ecNumber>
    </recommendedName>
</protein>
<keyword id="KW-0024">Alternative initiation</keyword>
<keyword id="KW-0933">Apicoplast</keyword>
<keyword id="KW-0963">Cytoplasm</keyword>
<keyword id="KW-1015">Disulfide bond</keyword>
<keyword id="KW-0274">FAD</keyword>
<keyword id="KW-0285">Flavoprotein</keyword>
<keyword id="KW-0521">NADP</keyword>
<keyword id="KW-0560">Oxidoreductase</keyword>
<keyword id="KW-0934">Plastid</keyword>
<keyword id="KW-0676">Redox-active center</keyword>
<keyword id="KW-1185">Reference proteome</keyword>
<keyword id="KW-0809">Transit peptide</keyword>
<accession>O15770</accession>
<accession>A0A144A323</accession>
<accession>A0A144A3W0</accession>
<accession>Q8ILQ2</accession>
<feature type="initiator methionine" description="Removed" evidence="2">
    <location>
        <position position="1"/>
    </location>
</feature>
<feature type="transit peptide" description="Apicoplast" evidence="4">
    <location>
        <begin position="2"/>
        <end position="46"/>
    </location>
</feature>
<feature type="chain" id="PRO_0000067960" description="Glutathione reductase">
    <location>
        <begin position="47"/>
        <end position="546"/>
    </location>
</feature>
<feature type="active site" description="Proton acceptor" evidence="1">
    <location>
        <position position="531"/>
    </location>
</feature>
<feature type="binding site" evidence="2">
    <location>
        <position position="58"/>
    </location>
    <ligand>
        <name>FAD</name>
        <dbReference type="ChEBI" id="CHEBI:57692"/>
    </ligand>
</feature>
<feature type="binding site" evidence="1">
    <location>
        <position position="58"/>
    </location>
    <ligand>
        <name>glutathione</name>
        <dbReference type="ChEBI" id="CHEBI:57925"/>
    </ligand>
</feature>
<feature type="binding site" evidence="2">
    <location>
        <position position="59"/>
    </location>
    <ligand>
        <name>FAD</name>
        <dbReference type="ChEBI" id="CHEBI:57692"/>
    </ligand>
</feature>
<feature type="binding site" evidence="1">
    <location>
        <position position="65"/>
    </location>
    <ligand>
        <name>glutathione</name>
        <dbReference type="ChEBI" id="CHEBI:57925"/>
    </ligand>
</feature>
<feature type="binding site" evidence="2">
    <location>
        <position position="78"/>
    </location>
    <ligand>
        <name>FAD</name>
        <dbReference type="ChEBI" id="CHEBI:57692"/>
    </ligand>
</feature>
<feature type="binding site" evidence="2">
    <location>
        <position position="85"/>
    </location>
    <ligand>
        <name>FAD</name>
        <dbReference type="ChEBI" id="CHEBI:57692"/>
    </ligand>
</feature>
<feature type="binding site" evidence="2">
    <location>
        <position position="86"/>
    </location>
    <ligand>
        <name>FAD</name>
        <dbReference type="ChEBI" id="CHEBI:57692"/>
    </ligand>
</feature>
<feature type="binding site" evidence="2">
    <location>
        <position position="94"/>
    </location>
    <ligand>
        <name>FAD</name>
        <dbReference type="ChEBI" id="CHEBI:57692"/>
    </ligand>
</feature>
<feature type="binding site" evidence="1">
    <location>
        <position position="141"/>
    </location>
    <ligand>
        <name>glutathione</name>
        <dbReference type="ChEBI" id="CHEBI:57925"/>
    </ligand>
</feature>
<feature type="binding site" evidence="2">
    <location>
        <position position="157"/>
    </location>
    <ligand>
        <name>FAD</name>
        <dbReference type="ChEBI" id="CHEBI:57692"/>
    </ligand>
</feature>
<feature type="binding site" evidence="1">
    <location>
        <position position="233"/>
    </location>
    <ligand>
        <name>NADP(+)</name>
        <dbReference type="ChEBI" id="CHEBI:58349"/>
    </ligand>
</feature>
<feature type="binding site" evidence="1">
    <location>
        <position position="236"/>
    </location>
    <ligand>
        <name>NADP(+)</name>
        <dbReference type="ChEBI" id="CHEBI:58349"/>
    </ligand>
</feature>
<feature type="binding site" evidence="1">
    <location>
        <position position="253"/>
    </location>
    <ligand>
        <name>NADP(+)</name>
        <dbReference type="ChEBI" id="CHEBI:58349"/>
    </ligand>
</feature>
<feature type="binding site" evidence="1">
    <location>
        <position position="259"/>
    </location>
    <ligand>
        <name>NADP(+)</name>
        <dbReference type="ChEBI" id="CHEBI:58349"/>
    </ligand>
</feature>
<feature type="binding site" evidence="1">
    <location>
        <position position="318"/>
    </location>
    <ligand>
        <name>NADP(+)</name>
        <dbReference type="ChEBI" id="CHEBI:58349"/>
    </ligand>
</feature>
<feature type="binding site" evidence="2">
    <location>
        <position position="358"/>
    </location>
    <ligand>
        <name>FAD</name>
        <dbReference type="ChEBI" id="CHEBI:57692"/>
    </ligand>
</feature>
<feature type="binding site" evidence="2">
    <location>
        <position position="400"/>
    </location>
    <ligand>
        <name>FAD</name>
        <dbReference type="ChEBI" id="CHEBI:57692"/>
    </ligand>
</feature>
<feature type="binding site" evidence="1">
    <location>
        <position position="408"/>
    </location>
    <ligand>
        <name>glutathione</name>
        <dbReference type="ChEBI" id="CHEBI:57925"/>
    </ligand>
</feature>
<feature type="binding site" evidence="1">
    <location>
        <position position="430"/>
    </location>
    <ligand>
        <name>NADP(+)</name>
        <dbReference type="ChEBI" id="CHEBI:58349"/>
    </ligand>
</feature>
<feature type="binding site" evidence="2">
    <location>
        <position position="531"/>
    </location>
    <ligand>
        <name>FAD</name>
        <dbReference type="ChEBI" id="CHEBI:57692"/>
    </ligand>
</feature>
<feature type="disulfide bond" description="Redox-active" evidence="2">
    <location>
        <begin position="86"/>
        <end position="91"/>
    </location>
</feature>
<feature type="splice variant" id="VSP_061462" description="In isoform 1." evidence="7">
    <location>
        <begin position="1"/>
        <end position="46"/>
    </location>
</feature>
<feature type="sequence conflict" description="In Ref. 1; AAB84117." evidence="7" ref="1">
    <original>E</original>
    <variation>G</variation>
    <location>
        <position position="329"/>
    </location>
</feature>